<accession>Q9NAS8</accession>
<accession>Q7QGN4</accession>
<evidence type="ECO:0000250" key="1">
    <source>
        <dbReference type="UniProtKB" id="A0A126GUP6"/>
    </source>
</evidence>
<evidence type="ECO:0000250" key="2">
    <source>
        <dbReference type="UniProtKB" id="Q9GRW0"/>
    </source>
</evidence>
<evidence type="ECO:0000255" key="3"/>
<evidence type="ECO:0000255" key="4">
    <source>
        <dbReference type="PROSITE-ProRule" id="PRU00274"/>
    </source>
</evidence>
<evidence type="ECO:0000255" key="5">
    <source>
        <dbReference type="PROSITE-ProRule" id="PRU00498"/>
    </source>
</evidence>
<evidence type="ECO:0000255" key="6">
    <source>
        <dbReference type="PROSITE-ProRule" id="PRU01236"/>
    </source>
</evidence>
<evidence type="ECO:0000269" key="7">
    <source>
    </source>
</evidence>
<evidence type="ECO:0000303" key="8">
    <source>
    </source>
</evidence>
<evidence type="ECO:0000305" key="9"/>
<evidence type="ECO:0000305" key="10">
    <source>
    </source>
</evidence>
<evidence type="ECO:0000312" key="11">
    <source>
        <dbReference type="EMBL" id="CAB90819.1"/>
    </source>
</evidence>
<evidence type="ECO:0000312" key="12">
    <source>
        <dbReference type="EMBL" id="EAA05468.4"/>
    </source>
</evidence>
<evidence type="ECO:0000312" key="13">
    <source>
        <dbReference type="Proteomes" id="UP000007062"/>
    </source>
</evidence>
<organism evidence="11">
    <name type="scientific">Anopheles gambiae</name>
    <name type="common">African malaria mosquito</name>
    <dbReference type="NCBI Taxonomy" id="7165"/>
    <lineage>
        <taxon>Eukaryota</taxon>
        <taxon>Metazoa</taxon>
        <taxon>Ecdysozoa</taxon>
        <taxon>Arthropoda</taxon>
        <taxon>Hexapoda</taxon>
        <taxon>Insecta</taxon>
        <taxon>Pterygota</taxon>
        <taxon>Neoptera</taxon>
        <taxon>Endopterygota</taxon>
        <taxon>Diptera</taxon>
        <taxon>Nematocera</taxon>
        <taxon>Culicoidea</taxon>
        <taxon>Culicidae</taxon>
        <taxon>Anophelinae</taxon>
        <taxon>Anopheles</taxon>
    </lineage>
</organism>
<name>CLB14_ANOGA</name>
<gene>
    <name evidence="8" type="primary">CLIPB14</name>
    <name evidence="11" type="synonym">ser4</name>
    <name evidence="12" type="ORF">AGAP010833</name>
</gene>
<keyword id="KW-1015">Disulfide bond</keyword>
<keyword id="KW-0325">Glycoprotein</keyword>
<keyword id="KW-0378">Hydrolase</keyword>
<keyword id="KW-0391">Immunity</keyword>
<keyword id="KW-0399">Innate immunity</keyword>
<keyword id="KW-0645">Protease</keyword>
<keyword id="KW-1185">Reference proteome</keyword>
<keyword id="KW-0964">Secreted</keyword>
<keyword id="KW-0720">Serine protease</keyword>
<keyword id="KW-0732">Signal</keyword>
<protein>
    <recommendedName>
        <fullName evidence="9">CLIP domain-containing serine protease B14</fullName>
        <ecNumber evidence="4">3.4.21.-</ecNumber>
    </recommendedName>
    <component>
        <recommendedName>
            <fullName evidence="9">CLIP domain-containing serine protease B14 light chain</fullName>
        </recommendedName>
    </component>
    <component>
        <recommendedName>
            <fullName evidence="9">CLIP domain-containing serine protease B14 heavy chain</fullName>
        </recommendedName>
    </component>
</protein>
<reference evidence="11" key="1">
    <citation type="journal article" date="2005" name="J. Biol. Chem.">
        <title>The roles of two clip domain serine proteases in innate immune responses of the malaria vector Anopheles gambiae.</title>
        <authorList>
            <person name="Volz J."/>
            <person name="Osta M.A."/>
            <person name="Kafatos F.C."/>
            <person name="Mueller H.M."/>
        </authorList>
    </citation>
    <scope>NUCLEOTIDE SEQUENCE [MRNA]</scope>
    <scope>FUNCTION</scope>
    <scope>SUBCELLULAR LOCATION</scope>
    <scope>TISSUE SPECIFICITY</scope>
    <scope>DEVELOPMENTAL STAGE</scope>
    <scope>INDUCTION</scope>
    <scope>GLYCOSYLATION</scope>
    <scope>PROTEOLYTIC CLEAVAGE</scope>
    <scope>DISRUPTION PHENOTYPE</scope>
</reference>
<reference evidence="13" key="2">
    <citation type="journal article" date="2002" name="Science">
        <title>The genome sequence of the malaria mosquito Anopheles gambiae.</title>
        <authorList>
            <person name="Holt R.A."/>
            <person name="Subramanian G.M."/>
            <person name="Halpern A."/>
            <person name="Sutton G.G."/>
            <person name="Charlab R."/>
            <person name="Nusskern D.R."/>
            <person name="Wincker P."/>
            <person name="Clark A.G."/>
            <person name="Ribeiro J.M.C."/>
            <person name="Wides R."/>
            <person name="Salzberg S.L."/>
            <person name="Loftus B.J."/>
            <person name="Yandell M.D."/>
            <person name="Majoros W.H."/>
            <person name="Rusch D.B."/>
            <person name="Lai Z."/>
            <person name="Kraft C.L."/>
            <person name="Abril J.F."/>
            <person name="Anthouard V."/>
            <person name="Arensburger P."/>
            <person name="Atkinson P.W."/>
            <person name="Baden H."/>
            <person name="de Berardinis V."/>
            <person name="Baldwin D."/>
            <person name="Benes V."/>
            <person name="Biedler J."/>
            <person name="Blass C."/>
            <person name="Bolanos R."/>
            <person name="Boscus D."/>
            <person name="Barnstead M."/>
            <person name="Cai S."/>
            <person name="Center A."/>
            <person name="Chaturverdi K."/>
            <person name="Christophides G.K."/>
            <person name="Chrystal M.A.M."/>
            <person name="Clamp M."/>
            <person name="Cravchik A."/>
            <person name="Curwen V."/>
            <person name="Dana A."/>
            <person name="Delcher A."/>
            <person name="Dew I."/>
            <person name="Evans C.A."/>
            <person name="Flanigan M."/>
            <person name="Grundschober-Freimoser A."/>
            <person name="Friedli L."/>
            <person name="Gu Z."/>
            <person name="Guan P."/>
            <person name="Guigo R."/>
            <person name="Hillenmeyer M.E."/>
            <person name="Hladun S.L."/>
            <person name="Hogan J.R."/>
            <person name="Hong Y.S."/>
            <person name="Hoover J."/>
            <person name="Jaillon O."/>
            <person name="Ke Z."/>
            <person name="Kodira C.D."/>
            <person name="Kokoza E."/>
            <person name="Koutsos A."/>
            <person name="Letunic I."/>
            <person name="Levitsky A.A."/>
            <person name="Liang Y."/>
            <person name="Lin J.-J."/>
            <person name="Lobo N.F."/>
            <person name="Lopez J.R."/>
            <person name="Malek J.A."/>
            <person name="McIntosh T.C."/>
            <person name="Meister S."/>
            <person name="Miller J.R."/>
            <person name="Mobarry C."/>
            <person name="Mongin E."/>
            <person name="Murphy S.D."/>
            <person name="O'Brochta D.A."/>
            <person name="Pfannkoch C."/>
            <person name="Qi R."/>
            <person name="Regier M.A."/>
            <person name="Remington K."/>
            <person name="Shao H."/>
            <person name="Sharakhova M.V."/>
            <person name="Sitter C.D."/>
            <person name="Shetty J."/>
            <person name="Smith T.J."/>
            <person name="Strong R."/>
            <person name="Sun J."/>
            <person name="Thomasova D."/>
            <person name="Ton L.Q."/>
            <person name="Topalis P."/>
            <person name="Tu Z.J."/>
            <person name="Unger M.F."/>
            <person name="Walenz B."/>
            <person name="Wang A.H."/>
            <person name="Wang J."/>
            <person name="Wang M."/>
            <person name="Wang X."/>
            <person name="Woodford K.J."/>
            <person name="Wortman J.R."/>
            <person name="Wu M."/>
            <person name="Yao A."/>
            <person name="Zdobnov E.M."/>
            <person name="Zhang H."/>
            <person name="Zhao Q."/>
            <person name="Zhao S."/>
            <person name="Zhu S.C."/>
            <person name="Zhimulev I."/>
            <person name="Coluzzi M."/>
            <person name="della Torre A."/>
            <person name="Roth C.W."/>
            <person name="Louis C."/>
            <person name="Kalush F."/>
            <person name="Mural R.J."/>
            <person name="Myers E.W."/>
            <person name="Adams M.D."/>
            <person name="Smith H.O."/>
            <person name="Broder S."/>
            <person name="Gardner M.J."/>
            <person name="Fraser C.M."/>
            <person name="Birney E."/>
            <person name="Bork P."/>
            <person name="Brey P.T."/>
            <person name="Venter J.C."/>
            <person name="Weissenbach J."/>
            <person name="Kafatos F.C."/>
            <person name="Collins F.H."/>
            <person name="Hoffman S.L."/>
        </authorList>
    </citation>
    <scope>NUCLEOTIDE SEQUENCE [LARGE SCALE GENOMIC DNA]</scope>
    <source>
        <strain evidence="13">PEST</strain>
    </source>
</reference>
<sequence>MYSRRYVACGLLCLLVIAIDQGHGQEHKPCTTPNGTAGRCVRVRECGYVLDLLRKDLFAHSDTVHLEGLQCGTRPDGGALVCCPAFVNEPNCGPSVFGVRIIGGNDTELGEFPWMALLRFQARNRKIHGNCGASLVSKRFVLSAAHCFTAAKSKGWKIHSVRVAEWNFMNHRGSKDCKQVKGYDVPICRKDYDVARFVQHPEYRVNAGVHVNDIVLIELAADVEYNVFVAPICLPVSNDTAQLPWGSSDDPEIEYTAAGWGSTESGKESTGMSYQLKQINLRAFNKERCKKLFQVPSGVGVGLGHICAGGIRDEDTCHGDSGGPLMEAVGGVWYLAGITSFGWPRCGRDGVPGVYTNISHYMGWLEREMFRGILA</sequence>
<dbReference type="EC" id="3.4.21.-" evidence="4"/>
<dbReference type="EMBL" id="AJ276487">
    <property type="protein sequence ID" value="CAB90819.1"/>
    <property type="molecule type" value="mRNA"/>
</dbReference>
<dbReference type="EMBL" id="AAAB01008823">
    <property type="protein sequence ID" value="EAA05468.4"/>
    <property type="molecule type" value="Genomic_DNA"/>
</dbReference>
<dbReference type="RefSeq" id="XP_309876.4">
    <property type="nucleotide sequence ID" value="XM_309876.4"/>
</dbReference>
<dbReference type="SMR" id="Q9NAS8"/>
<dbReference type="STRING" id="7165.Q9NAS8"/>
<dbReference type="MEROPS" id="S01.448"/>
<dbReference type="GlyCosmos" id="Q9NAS8">
    <property type="glycosylation" value="4 sites, No reported glycans"/>
</dbReference>
<dbReference type="PaxDb" id="7165-AGAP010833-PA"/>
<dbReference type="EnsemblMetazoa" id="AGAP010833-RA">
    <property type="protein sequence ID" value="AGAP010833-PA"/>
    <property type="gene ID" value="AGAP010833"/>
</dbReference>
<dbReference type="GeneID" id="1271130"/>
<dbReference type="KEGG" id="aga:1271130"/>
<dbReference type="VEuPathDB" id="VectorBase:AGAMI1_011923"/>
<dbReference type="VEuPathDB" id="VectorBase:AGAP010833"/>
<dbReference type="eggNOG" id="KOG3627">
    <property type="taxonomic scope" value="Eukaryota"/>
</dbReference>
<dbReference type="HOGENOM" id="CLU_006842_0_3_1"/>
<dbReference type="InParanoid" id="Q9NAS8"/>
<dbReference type="OMA" id="VRVAEWN"/>
<dbReference type="PhylomeDB" id="Q9NAS8"/>
<dbReference type="Proteomes" id="UP000007062">
    <property type="component" value="Chromosome 3L"/>
</dbReference>
<dbReference type="GO" id="GO:0005615">
    <property type="term" value="C:extracellular space"/>
    <property type="evidence" value="ECO:0000314"/>
    <property type="project" value="UniProtKB"/>
</dbReference>
<dbReference type="GO" id="GO:0004252">
    <property type="term" value="F:serine-type endopeptidase activity"/>
    <property type="evidence" value="ECO:0000318"/>
    <property type="project" value="GO_Central"/>
</dbReference>
<dbReference type="GO" id="GO:0050829">
    <property type="term" value="P:defense response to Gram-negative bacterium"/>
    <property type="evidence" value="ECO:0000315"/>
    <property type="project" value="UniProtKB"/>
</dbReference>
<dbReference type="GO" id="GO:0042832">
    <property type="term" value="P:defense response to protozoan"/>
    <property type="evidence" value="ECO:0000315"/>
    <property type="project" value="UniProtKB"/>
</dbReference>
<dbReference type="GO" id="GO:0045087">
    <property type="term" value="P:innate immune response"/>
    <property type="evidence" value="ECO:0007669"/>
    <property type="project" value="UniProtKB-KW"/>
</dbReference>
<dbReference type="GO" id="GO:0006508">
    <property type="term" value="P:proteolysis"/>
    <property type="evidence" value="ECO:0000318"/>
    <property type="project" value="GO_Central"/>
</dbReference>
<dbReference type="CDD" id="cd00190">
    <property type="entry name" value="Tryp_SPc"/>
    <property type="match status" value="1"/>
</dbReference>
<dbReference type="FunFam" id="2.40.10.10:FF:000028">
    <property type="entry name" value="Serine protease easter"/>
    <property type="match status" value="1"/>
</dbReference>
<dbReference type="FunFam" id="2.40.10.10:FF:000134">
    <property type="entry name" value="Uncharacterized protein, isoform B"/>
    <property type="match status" value="1"/>
</dbReference>
<dbReference type="Gene3D" id="3.30.1640.30">
    <property type="match status" value="1"/>
</dbReference>
<dbReference type="Gene3D" id="2.40.10.10">
    <property type="entry name" value="Trypsin-like serine proteases"/>
    <property type="match status" value="2"/>
</dbReference>
<dbReference type="InterPro" id="IPR022700">
    <property type="entry name" value="CLIP"/>
</dbReference>
<dbReference type="InterPro" id="IPR038565">
    <property type="entry name" value="CLIP_sf"/>
</dbReference>
<dbReference type="InterPro" id="IPR009003">
    <property type="entry name" value="Peptidase_S1_PA"/>
</dbReference>
<dbReference type="InterPro" id="IPR043504">
    <property type="entry name" value="Peptidase_S1_PA_chymotrypsin"/>
</dbReference>
<dbReference type="InterPro" id="IPR001314">
    <property type="entry name" value="Peptidase_S1A"/>
</dbReference>
<dbReference type="InterPro" id="IPR051487">
    <property type="entry name" value="Ser/Thr_Proteases_Immune/Dev"/>
</dbReference>
<dbReference type="InterPro" id="IPR001254">
    <property type="entry name" value="Trypsin_dom"/>
</dbReference>
<dbReference type="InterPro" id="IPR018114">
    <property type="entry name" value="TRYPSIN_HIS"/>
</dbReference>
<dbReference type="InterPro" id="IPR033116">
    <property type="entry name" value="TRYPSIN_SER"/>
</dbReference>
<dbReference type="PANTHER" id="PTHR24256">
    <property type="entry name" value="TRYPTASE-RELATED"/>
    <property type="match status" value="1"/>
</dbReference>
<dbReference type="Pfam" id="PF12032">
    <property type="entry name" value="CLIP"/>
    <property type="match status" value="1"/>
</dbReference>
<dbReference type="Pfam" id="PF00089">
    <property type="entry name" value="Trypsin"/>
    <property type="match status" value="1"/>
</dbReference>
<dbReference type="PRINTS" id="PR00722">
    <property type="entry name" value="CHYMOTRYPSIN"/>
</dbReference>
<dbReference type="SMART" id="SM00680">
    <property type="entry name" value="CLIP"/>
    <property type="match status" value="1"/>
</dbReference>
<dbReference type="SMART" id="SM00020">
    <property type="entry name" value="Tryp_SPc"/>
    <property type="match status" value="1"/>
</dbReference>
<dbReference type="SUPFAM" id="SSF50494">
    <property type="entry name" value="Trypsin-like serine proteases"/>
    <property type="match status" value="1"/>
</dbReference>
<dbReference type="PROSITE" id="PS51888">
    <property type="entry name" value="CLIP"/>
    <property type="match status" value="1"/>
</dbReference>
<dbReference type="PROSITE" id="PS50240">
    <property type="entry name" value="TRYPSIN_DOM"/>
    <property type="match status" value="1"/>
</dbReference>
<dbReference type="PROSITE" id="PS00134">
    <property type="entry name" value="TRYPSIN_HIS"/>
    <property type="match status" value="1"/>
</dbReference>
<dbReference type="PROSITE" id="PS00135">
    <property type="entry name" value="TRYPSIN_SER"/>
    <property type="match status" value="1"/>
</dbReference>
<feature type="signal peptide" evidence="3">
    <location>
        <begin position="1"/>
        <end position="24"/>
    </location>
</feature>
<feature type="chain" id="PRO_5013536756" description="CLIP domain-containing serine protease B14" evidence="3">
    <location>
        <begin position="25"/>
        <end position="375"/>
    </location>
</feature>
<feature type="chain" id="PRO_0000455750" description="CLIP domain-containing serine protease B14 light chain" evidence="2">
    <location>
        <begin position="25"/>
        <end position="100"/>
    </location>
</feature>
<feature type="chain" id="PRO_0000455751" description="CLIP domain-containing serine protease B14 heavy chain" evidence="2">
    <location>
        <begin position="101"/>
        <end position="375"/>
    </location>
</feature>
<feature type="domain" description="Clip" evidence="6">
    <location>
        <begin position="29"/>
        <end position="83"/>
    </location>
</feature>
<feature type="domain" description="Peptidase S1" evidence="4">
    <location>
        <begin position="101"/>
        <end position="370"/>
    </location>
</feature>
<feature type="active site" description="Charge relay system" evidence="4">
    <location>
        <position position="146"/>
    </location>
</feature>
<feature type="active site" description="Charge relay system" evidence="4">
    <location>
        <position position="213"/>
    </location>
</feature>
<feature type="active site" description="Charge relay system" evidence="4">
    <location>
        <position position="321"/>
    </location>
</feature>
<feature type="site" description="Cleavage" evidence="2">
    <location>
        <begin position="100"/>
        <end position="101"/>
    </location>
</feature>
<feature type="glycosylation site" description="N-linked (GlcNAc...) asparagine" evidence="5">
    <location>
        <position position="34"/>
    </location>
</feature>
<feature type="glycosylation site" description="N-linked (GlcNAc...) asparagine" evidence="5">
    <location>
        <position position="105"/>
    </location>
</feature>
<feature type="glycosylation site" description="N-linked (GlcNAc...) asparagine" evidence="5">
    <location>
        <position position="238"/>
    </location>
</feature>
<feature type="glycosylation site" description="N-linked (GlcNAc...) asparagine" evidence="5">
    <location>
        <position position="357"/>
    </location>
</feature>
<feature type="disulfide bond" evidence="6">
    <location>
        <begin position="30"/>
        <end position="82"/>
    </location>
</feature>
<feature type="disulfide bond" evidence="6">
    <location>
        <begin position="40"/>
        <end position="71"/>
    </location>
</feature>
<feature type="disulfide bond" evidence="6">
    <location>
        <begin position="46"/>
        <end position="83"/>
    </location>
</feature>
<feature type="disulfide bond" evidence="4">
    <location>
        <begin position="131"/>
        <end position="147"/>
    </location>
</feature>
<feature type="disulfide bond" evidence="4">
    <location>
        <begin position="289"/>
        <end position="307"/>
    </location>
</feature>
<feature type="disulfide bond" evidence="4">
    <location>
        <begin position="317"/>
        <end position="346"/>
    </location>
</feature>
<comment type="function">
    <text evidence="1 7">Serine protease (By similarity). Plays a role in innate immunity against infections by parasite P.berghei and by Gram-negative bacteria such as E.coli (PubMed:16188883). In response to P.berghei infection, contributes to the clearing of parasite ookinetes independent of melanization, an innate immune response which consists in the deposition of melanin pigments on invading pathogens and parasites (PubMed:16188883). May play a role in non-septic wound healing (PubMed:16188883).</text>
</comment>
<comment type="subcellular location">
    <subcellularLocation>
        <location evidence="7">Secreted</location>
    </subcellularLocation>
    <text evidence="7">Secreted in the hemolymph.</text>
</comment>
<comment type="tissue specificity">
    <text evidence="7">Expressed by a subpopulation of hemocytes.</text>
</comment>
<comment type="developmental stage">
    <text evidence="7">Expressed in adult females and to a lesser extent in the second and third larval, and pupal stages.</text>
</comment>
<comment type="induction">
    <text evidence="7">Induced by infection with E.coli or S.aureus bacteria. Induced by infection with P.berghei parasite following ookinete invasion of the midgut cells. Induced to some extent upon sterile injury.</text>
</comment>
<comment type="domain">
    <text evidence="6">The clip domain consists of 35-55 residues which are 'knitted' together usually by 3 conserved disulfide bonds forming a clip-like compact structure.</text>
</comment>
<comment type="PTM">
    <text evidence="7">N-glycosylated.</text>
</comment>
<comment type="PTM">
    <text evidence="10">Proteolytically cleaved.</text>
</comment>
<comment type="disruption phenotype">
    <text evidence="7">RNAi-mediated knockdown in the G3 strain reduces survival following infection by E.coli bacteria but not following infection by S.aureus bacteria. Following P.berghei infection, the number of parasite oocysts in the gut is increased in the susceptible G3 strain due to a failure to kill or/and lyse ookinetes (the motile parasite zygote that enters the gut to form an oocyst). RNAi-mediated knockdown in the refractory L3-5 strain results in an increase in the number of killed and melanized ookinetes following P.berghei infection. Simultaneous knockdown of lectin CTL4 in the G3 strain (but not in L3-5 strain) causes an increase in the number of developing oocysts and a decrease in melanized ookinetes.</text>
</comment>
<comment type="similarity">
    <text evidence="6">Belongs to the peptidase S1 family. CLIP subfamily.</text>
</comment>
<proteinExistence type="evidence at protein level"/>